<reference key="1">
    <citation type="journal article" date="2006" name="Proc. Natl. Acad. Sci. U.S.A.">
        <title>Identification of genes subject to positive selection in uropathogenic strains of Escherichia coli: a comparative genomics approach.</title>
        <authorList>
            <person name="Chen S.L."/>
            <person name="Hung C.-S."/>
            <person name="Xu J."/>
            <person name="Reigstad C.S."/>
            <person name="Magrini V."/>
            <person name="Sabo A."/>
            <person name="Blasiar D."/>
            <person name="Bieri T."/>
            <person name="Meyer R.R."/>
            <person name="Ozersky P."/>
            <person name="Armstrong J.R."/>
            <person name="Fulton R.S."/>
            <person name="Latreille J.P."/>
            <person name="Spieth J."/>
            <person name="Hooton T.M."/>
            <person name="Mardis E.R."/>
            <person name="Hultgren S.J."/>
            <person name="Gordon J.I."/>
        </authorList>
    </citation>
    <scope>NUCLEOTIDE SEQUENCE [LARGE SCALE GENOMIC DNA]</scope>
    <source>
        <strain>UTI89 / UPEC</strain>
    </source>
</reference>
<accession>Q1RF04</accession>
<gene>
    <name evidence="2" type="primary">folD</name>
    <name type="ordered locus">UTI89_C0559</name>
</gene>
<keyword id="KW-0028">Amino-acid biosynthesis</keyword>
<keyword id="KW-0368">Histidine biosynthesis</keyword>
<keyword id="KW-0378">Hydrolase</keyword>
<keyword id="KW-0486">Methionine biosynthesis</keyword>
<keyword id="KW-0511">Multifunctional enzyme</keyword>
<keyword id="KW-0521">NADP</keyword>
<keyword id="KW-0554">One-carbon metabolism</keyword>
<keyword id="KW-0560">Oxidoreductase</keyword>
<keyword id="KW-0658">Purine biosynthesis</keyword>
<feature type="initiator methionine" description="Removed" evidence="1">
    <location>
        <position position="1"/>
    </location>
</feature>
<feature type="chain" id="PRO_0000268346" description="Bifunctional protein FolD">
    <location>
        <begin position="2"/>
        <end position="288"/>
    </location>
</feature>
<feature type="binding site" evidence="2">
    <location>
        <begin position="166"/>
        <end position="168"/>
    </location>
    <ligand>
        <name>NADP(+)</name>
        <dbReference type="ChEBI" id="CHEBI:58349"/>
    </ligand>
</feature>
<feature type="binding site" evidence="2">
    <location>
        <position position="232"/>
    </location>
    <ligand>
        <name>NADP(+)</name>
        <dbReference type="ChEBI" id="CHEBI:58349"/>
    </ligand>
</feature>
<evidence type="ECO:0000250" key="1"/>
<evidence type="ECO:0000255" key="2">
    <source>
        <dbReference type="HAMAP-Rule" id="MF_01576"/>
    </source>
</evidence>
<name>FOLD_ECOUT</name>
<dbReference type="EC" id="1.5.1.5" evidence="2"/>
<dbReference type="EC" id="3.5.4.9" evidence="2"/>
<dbReference type="EMBL" id="CP000243">
    <property type="protein sequence ID" value="ABE06060.1"/>
    <property type="molecule type" value="Genomic_DNA"/>
</dbReference>
<dbReference type="RefSeq" id="WP_000729155.1">
    <property type="nucleotide sequence ID" value="NZ_CP064825.1"/>
</dbReference>
<dbReference type="SMR" id="Q1RF04"/>
<dbReference type="GeneID" id="93776949"/>
<dbReference type="KEGG" id="eci:UTI89_C0559"/>
<dbReference type="HOGENOM" id="CLU_034045_2_1_6"/>
<dbReference type="UniPathway" id="UPA00193"/>
<dbReference type="Proteomes" id="UP000001952">
    <property type="component" value="Chromosome"/>
</dbReference>
<dbReference type="GO" id="GO:0005829">
    <property type="term" value="C:cytosol"/>
    <property type="evidence" value="ECO:0007669"/>
    <property type="project" value="TreeGrafter"/>
</dbReference>
<dbReference type="GO" id="GO:0004477">
    <property type="term" value="F:methenyltetrahydrofolate cyclohydrolase activity"/>
    <property type="evidence" value="ECO:0007669"/>
    <property type="project" value="UniProtKB-UniRule"/>
</dbReference>
<dbReference type="GO" id="GO:0004488">
    <property type="term" value="F:methylenetetrahydrofolate dehydrogenase (NADP+) activity"/>
    <property type="evidence" value="ECO:0007669"/>
    <property type="project" value="UniProtKB-UniRule"/>
</dbReference>
<dbReference type="GO" id="GO:0000105">
    <property type="term" value="P:L-histidine biosynthetic process"/>
    <property type="evidence" value="ECO:0007669"/>
    <property type="project" value="UniProtKB-KW"/>
</dbReference>
<dbReference type="GO" id="GO:0009086">
    <property type="term" value="P:methionine biosynthetic process"/>
    <property type="evidence" value="ECO:0007669"/>
    <property type="project" value="UniProtKB-KW"/>
</dbReference>
<dbReference type="GO" id="GO:0006164">
    <property type="term" value="P:purine nucleotide biosynthetic process"/>
    <property type="evidence" value="ECO:0007669"/>
    <property type="project" value="UniProtKB-KW"/>
</dbReference>
<dbReference type="GO" id="GO:0035999">
    <property type="term" value="P:tetrahydrofolate interconversion"/>
    <property type="evidence" value="ECO:0007669"/>
    <property type="project" value="UniProtKB-UniRule"/>
</dbReference>
<dbReference type="CDD" id="cd01080">
    <property type="entry name" value="NAD_bind_m-THF_DH_Cyclohyd"/>
    <property type="match status" value="1"/>
</dbReference>
<dbReference type="FunFam" id="3.40.50.10860:FF:000001">
    <property type="entry name" value="Bifunctional protein FolD"/>
    <property type="match status" value="1"/>
</dbReference>
<dbReference type="FunFam" id="3.40.50.720:FF:000006">
    <property type="entry name" value="Bifunctional protein FolD"/>
    <property type="match status" value="1"/>
</dbReference>
<dbReference type="Gene3D" id="3.40.50.10860">
    <property type="entry name" value="Leucine Dehydrogenase, chain A, domain 1"/>
    <property type="match status" value="1"/>
</dbReference>
<dbReference type="Gene3D" id="3.40.50.720">
    <property type="entry name" value="NAD(P)-binding Rossmann-like Domain"/>
    <property type="match status" value="1"/>
</dbReference>
<dbReference type="HAMAP" id="MF_01576">
    <property type="entry name" value="THF_DHG_CYH"/>
    <property type="match status" value="1"/>
</dbReference>
<dbReference type="InterPro" id="IPR046346">
    <property type="entry name" value="Aminoacid_DH-like_N_sf"/>
</dbReference>
<dbReference type="InterPro" id="IPR036291">
    <property type="entry name" value="NAD(P)-bd_dom_sf"/>
</dbReference>
<dbReference type="InterPro" id="IPR000672">
    <property type="entry name" value="THF_DH/CycHdrlase"/>
</dbReference>
<dbReference type="InterPro" id="IPR020630">
    <property type="entry name" value="THF_DH/CycHdrlase_cat_dom"/>
</dbReference>
<dbReference type="InterPro" id="IPR020867">
    <property type="entry name" value="THF_DH/CycHdrlase_CS"/>
</dbReference>
<dbReference type="InterPro" id="IPR020631">
    <property type="entry name" value="THF_DH/CycHdrlase_NAD-bd_dom"/>
</dbReference>
<dbReference type="NCBIfam" id="NF008058">
    <property type="entry name" value="PRK10792.1"/>
    <property type="match status" value="1"/>
</dbReference>
<dbReference type="NCBIfam" id="NF010783">
    <property type="entry name" value="PRK14186.1"/>
    <property type="match status" value="1"/>
</dbReference>
<dbReference type="PANTHER" id="PTHR48099:SF5">
    <property type="entry name" value="C-1-TETRAHYDROFOLATE SYNTHASE, CYTOPLASMIC"/>
    <property type="match status" value="1"/>
</dbReference>
<dbReference type="PANTHER" id="PTHR48099">
    <property type="entry name" value="C-1-TETRAHYDROFOLATE SYNTHASE, CYTOPLASMIC-RELATED"/>
    <property type="match status" value="1"/>
</dbReference>
<dbReference type="Pfam" id="PF00763">
    <property type="entry name" value="THF_DHG_CYH"/>
    <property type="match status" value="1"/>
</dbReference>
<dbReference type="Pfam" id="PF02882">
    <property type="entry name" value="THF_DHG_CYH_C"/>
    <property type="match status" value="1"/>
</dbReference>
<dbReference type="PRINTS" id="PR00085">
    <property type="entry name" value="THFDHDRGNASE"/>
</dbReference>
<dbReference type="SUPFAM" id="SSF53223">
    <property type="entry name" value="Aminoacid dehydrogenase-like, N-terminal domain"/>
    <property type="match status" value="1"/>
</dbReference>
<dbReference type="SUPFAM" id="SSF51735">
    <property type="entry name" value="NAD(P)-binding Rossmann-fold domains"/>
    <property type="match status" value="1"/>
</dbReference>
<dbReference type="PROSITE" id="PS00766">
    <property type="entry name" value="THF_DHG_CYH_1"/>
    <property type="match status" value="1"/>
</dbReference>
<dbReference type="PROSITE" id="PS00767">
    <property type="entry name" value="THF_DHG_CYH_2"/>
    <property type="match status" value="1"/>
</dbReference>
<organism>
    <name type="scientific">Escherichia coli (strain UTI89 / UPEC)</name>
    <dbReference type="NCBI Taxonomy" id="364106"/>
    <lineage>
        <taxon>Bacteria</taxon>
        <taxon>Pseudomonadati</taxon>
        <taxon>Pseudomonadota</taxon>
        <taxon>Gammaproteobacteria</taxon>
        <taxon>Enterobacterales</taxon>
        <taxon>Enterobacteriaceae</taxon>
        <taxon>Escherichia</taxon>
    </lineage>
</organism>
<protein>
    <recommendedName>
        <fullName evidence="2">Bifunctional protein FolD</fullName>
    </recommendedName>
    <domain>
        <recommendedName>
            <fullName evidence="2">Methylenetetrahydrofolate dehydrogenase</fullName>
            <ecNumber evidence="2">1.5.1.5</ecNumber>
        </recommendedName>
    </domain>
    <domain>
        <recommendedName>
            <fullName evidence="2">Methenyltetrahydrofolate cyclohydrolase</fullName>
            <ecNumber evidence="2">3.5.4.9</ecNumber>
        </recommendedName>
    </domain>
</protein>
<comment type="function">
    <text evidence="2">Catalyzes the oxidation of 5,10-methylenetetrahydrofolate to 5,10-methenyltetrahydrofolate and then the hydrolysis of 5,10-methenyltetrahydrofolate to 10-formyltetrahydrofolate.</text>
</comment>
<comment type="catalytic activity">
    <reaction evidence="2">
        <text>(6R)-5,10-methylene-5,6,7,8-tetrahydrofolate + NADP(+) = (6R)-5,10-methenyltetrahydrofolate + NADPH</text>
        <dbReference type="Rhea" id="RHEA:22812"/>
        <dbReference type="ChEBI" id="CHEBI:15636"/>
        <dbReference type="ChEBI" id="CHEBI:57455"/>
        <dbReference type="ChEBI" id="CHEBI:57783"/>
        <dbReference type="ChEBI" id="CHEBI:58349"/>
        <dbReference type="EC" id="1.5.1.5"/>
    </reaction>
</comment>
<comment type="catalytic activity">
    <reaction evidence="2">
        <text>(6R)-5,10-methenyltetrahydrofolate + H2O = (6R)-10-formyltetrahydrofolate + H(+)</text>
        <dbReference type="Rhea" id="RHEA:23700"/>
        <dbReference type="ChEBI" id="CHEBI:15377"/>
        <dbReference type="ChEBI" id="CHEBI:15378"/>
        <dbReference type="ChEBI" id="CHEBI:57455"/>
        <dbReference type="ChEBI" id="CHEBI:195366"/>
        <dbReference type="EC" id="3.5.4.9"/>
    </reaction>
</comment>
<comment type="pathway">
    <text evidence="2">One-carbon metabolism; tetrahydrofolate interconversion.</text>
</comment>
<comment type="subunit">
    <text evidence="2">Homodimer.</text>
</comment>
<comment type="similarity">
    <text evidence="2">Belongs to the tetrahydrofolate dehydrogenase/cyclohydrolase family.</text>
</comment>
<proteinExistence type="inferred from homology"/>
<sequence length="288" mass="30956">MAAKIIDGKTIAQQVRSEVAQKVQARIAAGLRAPGLAVVLVGSNPASQIYVASKRKACEEVGFVSRSYDLPETTSEAELLELIDALNADNTIDGILVQLPLPAGIDNVKVLERIHPDKDVDGFHPYNVGRLCQRAPRLRPCTPRGIVTLLERYNIDTFGLNAVVIGASNIVGRPMSMELLLAGCTTTVTHRFTKNLRHHVENADLLIVAVGKPGFIPGDWIKEGAIVIDVGINRLENGKVVGDVVFEDAAKRASYITPVPGGVGPMTVATLIENTLQACVEYHDPQGE</sequence>